<evidence type="ECO:0000250" key="1"/>
<evidence type="ECO:0000305" key="2"/>
<keyword id="KW-0378">Hydrolase</keyword>
<keyword id="KW-0464">Manganese</keyword>
<keyword id="KW-0479">Metal-binding</keyword>
<keyword id="KW-0904">Protein phosphatase</keyword>
<keyword id="KW-1185">Reference proteome</keyword>
<name>PPX1_PARTE</name>
<reference key="1">
    <citation type="submission" date="1995-07" db="EMBL/GenBank/DDBJ databases">
        <authorList>
            <person name="Russell C.B."/>
            <person name="Johnson J."/>
            <person name="Hinrichsen R.D."/>
        </authorList>
    </citation>
    <scope>NUCLEOTIDE SEQUENCE [GENOMIC DNA]</scope>
    <source>
        <strain>Stock 51</strain>
    </source>
</reference>
<reference key="2">
    <citation type="journal article" date="2006" name="Nature">
        <title>Global trends of whole-genome duplications revealed by the ciliate Paramecium tetraurelia.</title>
        <authorList>
            <person name="Aury J.-M."/>
            <person name="Jaillon O."/>
            <person name="Duret L."/>
            <person name="Noel B."/>
            <person name="Jubin C."/>
            <person name="Porcel B.M."/>
            <person name="Segurens B."/>
            <person name="Daubin V."/>
            <person name="Anthouard V."/>
            <person name="Aiach N."/>
            <person name="Arnaiz O."/>
            <person name="Billaut A."/>
            <person name="Beisson J."/>
            <person name="Blanc I."/>
            <person name="Bouhouche K."/>
            <person name="Camara F."/>
            <person name="Duharcourt S."/>
            <person name="Guigo R."/>
            <person name="Gogendeau D."/>
            <person name="Katinka M."/>
            <person name="Keller A.-M."/>
            <person name="Kissmehl R."/>
            <person name="Klotz C."/>
            <person name="Koll F."/>
            <person name="Le Mouel A."/>
            <person name="Lepere G."/>
            <person name="Malinsky S."/>
            <person name="Nowacki M."/>
            <person name="Nowak J.K."/>
            <person name="Plattner H."/>
            <person name="Poulain J."/>
            <person name="Ruiz F."/>
            <person name="Serrano V."/>
            <person name="Zagulski M."/>
            <person name="Dessen P."/>
            <person name="Betermier M."/>
            <person name="Weissenbach J."/>
            <person name="Scarpelli C."/>
            <person name="Schaechter V."/>
            <person name="Sperling L."/>
            <person name="Meyer E."/>
            <person name="Cohen J."/>
            <person name="Wincker P."/>
        </authorList>
    </citation>
    <scope>NUCLEOTIDE SEQUENCE [LARGE SCALE GENOMIC DNA]</scope>
    <source>
        <strain>Stock d4-2</strain>
    </source>
</reference>
<gene>
    <name type="primary">Ppx1</name>
    <name type="ORF">GSPATT00019262001</name>
</gene>
<feature type="chain" id="PRO_0000058888" description="Serine/threonine-protein phosphatase PP-X homolog 1">
    <location>
        <begin position="1"/>
        <end position="303"/>
    </location>
</feature>
<feature type="active site" description="Proton donor" evidence="1">
    <location>
        <position position="112"/>
    </location>
</feature>
<feature type="binding site" evidence="1">
    <location>
        <position position="51"/>
    </location>
    <ligand>
        <name>Mn(2+)</name>
        <dbReference type="ChEBI" id="CHEBI:29035"/>
        <label>1</label>
    </ligand>
</feature>
<feature type="binding site" evidence="1">
    <location>
        <position position="53"/>
    </location>
    <ligand>
        <name>Mn(2+)</name>
        <dbReference type="ChEBI" id="CHEBI:29035"/>
        <label>1</label>
    </ligand>
</feature>
<feature type="binding site" evidence="1">
    <location>
        <position position="79"/>
    </location>
    <ligand>
        <name>Mn(2+)</name>
        <dbReference type="ChEBI" id="CHEBI:29035"/>
        <label>1</label>
    </ligand>
</feature>
<feature type="binding site" evidence="1">
    <location>
        <position position="79"/>
    </location>
    <ligand>
        <name>Mn(2+)</name>
        <dbReference type="ChEBI" id="CHEBI:29035"/>
        <label>2</label>
    </ligand>
</feature>
<feature type="binding site" evidence="1">
    <location>
        <position position="111"/>
    </location>
    <ligand>
        <name>Mn(2+)</name>
        <dbReference type="ChEBI" id="CHEBI:29035"/>
        <label>2</label>
    </ligand>
</feature>
<feature type="binding site" evidence="1">
    <location>
        <position position="161"/>
    </location>
    <ligand>
        <name>Mn(2+)</name>
        <dbReference type="ChEBI" id="CHEBI:29035"/>
        <label>2</label>
    </ligand>
</feature>
<feature type="binding site" evidence="1">
    <location>
        <position position="235"/>
    </location>
    <ligand>
        <name>Mn(2+)</name>
        <dbReference type="ChEBI" id="CHEBI:29035"/>
        <label>2</label>
    </ligand>
</feature>
<feature type="sequence conflict" description="In Ref. 1; AAA75081." evidence="2" ref="1">
    <original>N</original>
    <variation>D</variation>
    <location>
        <position position="16"/>
    </location>
</feature>
<feature type="sequence conflict" description="In Ref. 1; AAA75081." evidence="2" ref="1">
    <original>T</original>
    <variation>S</variation>
    <location>
        <position position="20"/>
    </location>
</feature>
<feature type="sequence conflict" description="In Ref. 1; AAA75081." evidence="2" ref="1">
    <original>T</original>
    <variation>A</variation>
    <location>
        <position position="47"/>
    </location>
</feature>
<feature type="sequence conflict" description="In Ref. 1; AAA75081." evidence="2" ref="1">
    <original>L</original>
    <variation>V</variation>
    <location>
        <position position="62"/>
    </location>
</feature>
<feature type="sequence conflict" description="In Ref. 1; AAA75081." evidence="2" ref="1">
    <original>K</original>
    <variation>E</variation>
    <location>
        <position position="130"/>
    </location>
</feature>
<feature type="sequence conflict" description="In Ref. 1; AAA75081." evidence="2" ref="1">
    <original>V</original>
    <variation>T</variation>
    <location>
        <position position="297"/>
    </location>
</feature>
<dbReference type="EC" id="3.1.3.16"/>
<dbReference type="EMBL" id="U31445">
    <property type="protein sequence ID" value="AAA75081.1"/>
    <property type="molecule type" value="Genomic_DNA"/>
</dbReference>
<dbReference type="EMBL" id="CT868541">
    <property type="protein sequence ID" value="CAK85545.1"/>
    <property type="status" value="ALT_SEQ"/>
    <property type="molecule type" value="Genomic_DNA"/>
</dbReference>
<dbReference type="SMR" id="P49576"/>
<dbReference type="FunCoup" id="P49576">
    <property type="interactions" value="1048"/>
</dbReference>
<dbReference type="STRING" id="5888.P49576"/>
<dbReference type="KEGG" id="ptm:GSPATT00019262001"/>
<dbReference type="InParanoid" id="P49576"/>
<dbReference type="OrthoDB" id="1930084at2759"/>
<dbReference type="Proteomes" id="UP000000600">
    <property type="component" value="Partially assembled WGS sequence"/>
</dbReference>
<dbReference type="GO" id="GO:0005737">
    <property type="term" value="C:cytoplasm"/>
    <property type="evidence" value="ECO:0000318"/>
    <property type="project" value="GO_Central"/>
</dbReference>
<dbReference type="GO" id="GO:0005634">
    <property type="term" value="C:nucleus"/>
    <property type="evidence" value="ECO:0000318"/>
    <property type="project" value="GO_Central"/>
</dbReference>
<dbReference type="GO" id="GO:0046872">
    <property type="term" value="F:metal ion binding"/>
    <property type="evidence" value="ECO:0007669"/>
    <property type="project" value="UniProtKB-KW"/>
</dbReference>
<dbReference type="GO" id="GO:0004722">
    <property type="term" value="F:protein serine/threonine phosphatase activity"/>
    <property type="evidence" value="ECO:0000318"/>
    <property type="project" value="GO_Central"/>
</dbReference>
<dbReference type="GO" id="GO:0000724">
    <property type="term" value="P:double-strand break repair via homologous recombination"/>
    <property type="evidence" value="ECO:0000318"/>
    <property type="project" value="GO_Central"/>
</dbReference>
<dbReference type="CDD" id="cd07415">
    <property type="entry name" value="MPP_PP2A_PP4_PP6"/>
    <property type="match status" value="1"/>
</dbReference>
<dbReference type="FunFam" id="3.60.21.10:FF:000005">
    <property type="entry name" value="Serine/threonine-protein phosphatase"/>
    <property type="match status" value="1"/>
</dbReference>
<dbReference type="Gene3D" id="3.60.21.10">
    <property type="match status" value="1"/>
</dbReference>
<dbReference type="InterPro" id="IPR004843">
    <property type="entry name" value="Calcineurin-like_PHP_ApaH"/>
</dbReference>
<dbReference type="InterPro" id="IPR029052">
    <property type="entry name" value="Metallo-depent_PP-like"/>
</dbReference>
<dbReference type="InterPro" id="IPR047129">
    <property type="entry name" value="PPA2-like"/>
</dbReference>
<dbReference type="InterPro" id="IPR006186">
    <property type="entry name" value="Ser/Thr-sp_prot-phosphatase"/>
</dbReference>
<dbReference type="PANTHER" id="PTHR45619">
    <property type="entry name" value="SERINE/THREONINE-PROTEIN PHOSPHATASE PP2A-RELATED"/>
    <property type="match status" value="1"/>
</dbReference>
<dbReference type="Pfam" id="PF00149">
    <property type="entry name" value="Metallophos"/>
    <property type="match status" value="1"/>
</dbReference>
<dbReference type="PRINTS" id="PR00114">
    <property type="entry name" value="STPHPHTASE"/>
</dbReference>
<dbReference type="SMART" id="SM00156">
    <property type="entry name" value="PP2Ac"/>
    <property type="match status" value="1"/>
</dbReference>
<dbReference type="SUPFAM" id="SSF56300">
    <property type="entry name" value="Metallo-dependent phosphatases"/>
    <property type="match status" value="1"/>
</dbReference>
<dbReference type="PROSITE" id="PS00125">
    <property type="entry name" value="SER_THR_PHOSPHATASE"/>
    <property type="match status" value="1"/>
</dbReference>
<organism>
    <name type="scientific">Paramecium tetraurelia</name>
    <dbReference type="NCBI Taxonomy" id="5888"/>
    <lineage>
        <taxon>Eukaryota</taxon>
        <taxon>Sar</taxon>
        <taxon>Alveolata</taxon>
        <taxon>Ciliophora</taxon>
        <taxon>Intramacronucleata</taxon>
        <taxon>Oligohymenophorea</taxon>
        <taxon>Peniculida</taxon>
        <taxon>Parameciidae</taxon>
        <taxon>Paramecium</taxon>
    </lineage>
</organism>
<accession>P49576</accession>
<accession>A0DR78</accession>
<protein>
    <recommendedName>
        <fullName>Serine/threonine-protein phosphatase PP-X homolog 1</fullName>
        <ecNumber>3.1.3.16</ecNumber>
    </recommendedName>
</protein>
<sequence>MSDIDQWIETLKNGENLKETDVKILCNKAKDILNNEDNVIRVEAPVTICGDIHGQFYDLMELFKVGGDVPETNYLFLGDFVDRGYNSVETFLLLLALKVRYPDQITLIRGNHESRQITQVYGFYDECLRKYSTLNVWKYCTEVFDYLALAAVVNDNIFCVHGGLSPYIKTIDEIRIINRKQEVPHEGVMCDLMWSDPDEIEGWSQSARGAGFVFGADVVKEFNRRNGISLICRAHQLAMEGFKLMFDNSLVTVWSAPNYCYRCGNVASILELDENLKKYYKLFEAAPTDRAQNSKKVIADYFL</sequence>
<comment type="catalytic activity">
    <reaction>
        <text>O-phospho-L-seryl-[protein] + H2O = L-seryl-[protein] + phosphate</text>
        <dbReference type="Rhea" id="RHEA:20629"/>
        <dbReference type="Rhea" id="RHEA-COMP:9863"/>
        <dbReference type="Rhea" id="RHEA-COMP:11604"/>
        <dbReference type="ChEBI" id="CHEBI:15377"/>
        <dbReference type="ChEBI" id="CHEBI:29999"/>
        <dbReference type="ChEBI" id="CHEBI:43474"/>
        <dbReference type="ChEBI" id="CHEBI:83421"/>
        <dbReference type="EC" id="3.1.3.16"/>
    </reaction>
</comment>
<comment type="catalytic activity">
    <reaction>
        <text>O-phospho-L-threonyl-[protein] + H2O = L-threonyl-[protein] + phosphate</text>
        <dbReference type="Rhea" id="RHEA:47004"/>
        <dbReference type="Rhea" id="RHEA-COMP:11060"/>
        <dbReference type="Rhea" id="RHEA-COMP:11605"/>
        <dbReference type="ChEBI" id="CHEBI:15377"/>
        <dbReference type="ChEBI" id="CHEBI:30013"/>
        <dbReference type="ChEBI" id="CHEBI:43474"/>
        <dbReference type="ChEBI" id="CHEBI:61977"/>
        <dbReference type="EC" id="3.1.3.16"/>
    </reaction>
</comment>
<comment type="cofactor">
    <cofactor evidence="1">
        <name>Mn(2+)</name>
        <dbReference type="ChEBI" id="CHEBI:29035"/>
    </cofactor>
    <text evidence="1">Binds 2 manganese ions per subunit.</text>
</comment>
<comment type="similarity">
    <text evidence="2">Belongs to the PPP phosphatase family. PP-4 (PP-X) subfamily.</text>
</comment>
<comment type="sequence caution" evidence="2">
    <conflict type="erroneous gene model prediction">
        <sequence resource="EMBL-CDS" id="CAK85545"/>
    </conflict>
</comment>
<proteinExistence type="inferred from homology"/>